<reference key="1">
    <citation type="journal article" date="1997" name="Toxicon">
        <title>Cloning and characterization of cDNAs encoding three isoforms of phospholipase A2 in Malayan spitting cobra (Naja naja sputatrix) venom.</title>
        <authorList>
            <person name="Armugam A."/>
            <person name="Earnest L."/>
            <person name="Chung M.C.M."/>
            <person name="Gopalakrishnakone P."/>
            <person name="Tan C.H."/>
            <person name="Tan N.-H."/>
            <person name="Jeyaseelan K."/>
        </authorList>
    </citation>
    <scope>NUCLEOTIDE SEQUENCE [MRNA]</scope>
    <source>
        <tissue>Venom gland</tissue>
    </source>
</reference>
<organism>
    <name type="scientific">Naja sputatrix</name>
    <name type="common">Malayan spitting cobra</name>
    <name type="synonym">Naja naja sputatrix</name>
    <dbReference type="NCBI Taxonomy" id="33626"/>
    <lineage>
        <taxon>Eukaryota</taxon>
        <taxon>Metazoa</taxon>
        <taxon>Chordata</taxon>
        <taxon>Craniata</taxon>
        <taxon>Vertebrata</taxon>
        <taxon>Euteleostomi</taxon>
        <taxon>Lepidosauria</taxon>
        <taxon>Squamata</taxon>
        <taxon>Bifurcata</taxon>
        <taxon>Unidentata</taxon>
        <taxon>Episquamata</taxon>
        <taxon>Toxicofera</taxon>
        <taxon>Serpentes</taxon>
        <taxon>Colubroidea</taxon>
        <taxon>Elapidae</taxon>
        <taxon>Elapinae</taxon>
        <taxon>Naja</taxon>
    </lineage>
</organism>
<sequence length="146" mass="16082">MNPAHLLILAAVCVSPLGASSNRPMPLNLYQFKNMVQCTVPNRSWWDFADYGCYCGRGGSGTPVDDLDRCCQVHDNCYGEAEKISRCWPYFKTYSYECSQGTLTCKGGNNACAAAVCDCDRLAAICFAGAPYNDNNYNIDLKARCQ</sequence>
<name>PA2AC_NAJSP</name>
<feature type="signal peptide" evidence="2">
    <location>
        <begin position="1"/>
        <end position="21"/>
    </location>
</feature>
<feature type="propeptide" id="PRO_0000022934" evidence="1">
    <location>
        <begin position="22"/>
        <end position="27"/>
    </location>
</feature>
<feature type="chain" id="PRO_0000022935" description="Acidic phospholipase A2 C">
    <location>
        <begin position="28"/>
        <end position="146"/>
    </location>
</feature>
<feature type="active site" evidence="1">
    <location>
        <position position="74"/>
    </location>
</feature>
<feature type="active site" evidence="1">
    <location>
        <position position="120"/>
    </location>
</feature>
<feature type="binding site" evidence="1">
    <location>
        <position position="54"/>
    </location>
    <ligand>
        <name>Ca(2+)</name>
        <dbReference type="ChEBI" id="CHEBI:29108"/>
    </ligand>
</feature>
<feature type="binding site" evidence="1">
    <location>
        <position position="56"/>
    </location>
    <ligand>
        <name>Ca(2+)</name>
        <dbReference type="ChEBI" id="CHEBI:29108"/>
    </ligand>
</feature>
<feature type="binding site" evidence="1">
    <location>
        <position position="58"/>
    </location>
    <ligand>
        <name>Ca(2+)</name>
        <dbReference type="ChEBI" id="CHEBI:29108"/>
    </ligand>
</feature>
<feature type="binding site" evidence="1">
    <location>
        <position position="75"/>
    </location>
    <ligand>
        <name>Ca(2+)</name>
        <dbReference type="ChEBI" id="CHEBI:29108"/>
    </ligand>
</feature>
<feature type="disulfide bond" evidence="1">
    <location>
        <begin position="38"/>
        <end position="98"/>
    </location>
</feature>
<feature type="disulfide bond" evidence="1">
    <location>
        <begin position="53"/>
        <end position="145"/>
    </location>
</feature>
<feature type="disulfide bond" evidence="1">
    <location>
        <begin position="55"/>
        <end position="71"/>
    </location>
</feature>
<feature type="disulfide bond" evidence="1">
    <location>
        <begin position="70"/>
        <end position="126"/>
    </location>
</feature>
<feature type="disulfide bond" evidence="1">
    <location>
        <begin position="77"/>
        <end position="119"/>
    </location>
</feature>
<feature type="disulfide bond" evidence="1">
    <location>
        <begin position="87"/>
        <end position="112"/>
    </location>
</feature>
<feature type="disulfide bond" evidence="1">
    <location>
        <begin position="105"/>
        <end position="117"/>
    </location>
</feature>
<dbReference type="EC" id="3.1.1.4"/>
<dbReference type="EMBL" id="L42006">
    <property type="protein sequence ID" value="AAA66029.1"/>
    <property type="molecule type" value="mRNA"/>
</dbReference>
<dbReference type="SMR" id="Q92086"/>
<dbReference type="GO" id="GO:0005576">
    <property type="term" value="C:extracellular region"/>
    <property type="evidence" value="ECO:0007669"/>
    <property type="project" value="UniProtKB-SubCell"/>
</dbReference>
<dbReference type="GO" id="GO:0005509">
    <property type="term" value="F:calcium ion binding"/>
    <property type="evidence" value="ECO:0007669"/>
    <property type="project" value="InterPro"/>
</dbReference>
<dbReference type="GO" id="GO:0047498">
    <property type="term" value="F:calcium-dependent phospholipase A2 activity"/>
    <property type="evidence" value="ECO:0007669"/>
    <property type="project" value="TreeGrafter"/>
</dbReference>
<dbReference type="GO" id="GO:0005543">
    <property type="term" value="F:phospholipid binding"/>
    <property type="evidence" value="ECO:0007669"/>
    <property type="project" value="TreeGrafter"/>
</dbReference>
<dbReference type="GO" id="GO:0005102">
    <property type="term" value="F:signaling receptor binding"/>
    <property type="evidence" value="ECO:0007669"/>
    <property type="project" value="TreeGrafter"/>
</dbReference>
<dbReference type="GO" id="GO:0090729">
    <property type="term" value="F:toxin activity"/>
    <property type="evidence" value="ECO:0007669"/>
    <property type="project" value="UniProtKB-KW"/>
</dbReference>
<dbReference type="GO" id="GO:0050482">
    <property type="term" value="P:arachidonate secretion"/>
    <property type="evidence" value="ECO:0007669"/>
    <property type="project" value="InterPro"/>
</dbReference>
<dbReference type="GO" id="GO:0006633">
    <property type="term" value="P:fatty acid biosynthetic process"/>
    <property type="evidence" value="ECO:0007669"/>
    <property type="project" value="TreeGrafter"/>
</dbReference>
<dbReference type="GO" id="GO:0016042">
    <property type="term" value="P:lipid catabolic process"/>
    <property type="evidence" value="ECO:0007669"/>
    <property type="project" value="UniProtKB-KW"/>
</dbReference>
<dbReference type="GO" id="GO:0006644">
    <property type="term" value="P:phospholipid metabolic process"/>
    <property type="evidence" value="ECO:0007669"/>
    <property type="project" value="InterPro"/>
</dbReference>
<dbReference type="GO" id="GO:0048146">
    <property type="term" value="P:positive regulation of fibroblast proliferation"/>
    <property type="evidence" value="ECO:0007669"/>
    <property type="project" value="TreeGrafter"/>
</dbReference>
<dbReference type="CDD" id="cd00125">
    <property type="entry name" value="PLA2c"/>
    <property type="match status" value="1"/>
</dbReference>
<dbReference type="FunFam" id="1.20.90.10:FF:000007">
    <property type="entry name" value="Acidic phospholipase A2"/>
    <property type="match status" value="1"/>
</dbReference>
<dbReference type="Gene3D" id="1.20.90.10">
    <property type="entry name" value="Phospholipase A2 domain"/>
    <property type="match status" value="1"/>
</dbReference>
<dbReference type="InterPro" id="IPR001211">
    <property type="entry name" value="PLipase_A2"/>
</dbReference>
<dbReference type="InterPro" id="IPR033112">
    <property type="entry name" value="PLipase_A2_Asp_AS"/>
</dbReference>
<dbReference type="InterPro" id="IPR016090">
    <property type="entry name" value="PLipase_A2_dom"/>
</dbReference>
<dbReference type="InterPro" id="IPR036444">
    <property type="entry name" value="PLipase_A2_dom_sf"/>
</dbReference>
<dbReference type="InterPro" id="IPR033113">
    <property type="entry name" value="PLipase_A2_His_AS"/>
</dbReference>
<dbReference type="PANTHER" id="PTHR11716:SF94">
    <property type="entry name" value="PHOSPHOLIPASE A2"/>
    <property type="match status" value="1"/>
</dbReference>
<dbReference type="PANTHER" id="PTHR11716">
    <property type="entry name" value="PHOSPHOLIPASE A2 FAMILY MEMBER"/>
    <property type="match status" value="1"/>
</dbReference>
<dbReference type="Pfam" id="PF00068">
    <property type="entry name" value="Phospholip_A2_1"/>
    <property type="match status" value="1"/>
</dbReference>
<dbReference type="PRINTS" id="PR00389">
    <property type="entry name" value="PHPHLIPASEA2"/>
</dbReference>
<dbReference type="SMART" id="SM00085">
    <property type="entry name" value="PA2c"/>
    <property type="match status" value="1"/>
</dbReference>
<dbReference type="SUPFAM" id="SSF48619">
    <property type="entry name" value="Phospholipase A2, PLA2"/>
    <property type="match status" value="1"/>
</dbReference>
<dbReference type="PROSITE" id="PS00119">
    <property type="entry name" value="PA2_ASP"/>
    <property type="match status" value="1"/>
</dbReference>
<dbReference type="PROSITE" id="PS00118">
    <property type="entry name" value="PA2_HIS"/>
    <property type="match status" value="1"/>
</dbReference>
<comment type="function">
    <text evidence="1">PLA2 catalyzes the calcium-dependent hydrolysis of the 2-acyl groups in 3-sn-phosphoglycerides.</text>
</comment>
<comment type="catalytic activity">
    <reaction evidence="3 4">
        <text>a 1,2-diacyl-sn-glycero-3-phosphocholine + H2O = a 1-acyl-sn-glycero-3-phosphocholine + a fatty acid + H(+)</text>
        <dbReference type="Rhea" id="RHEA:15801"/>
        <dbReference type="ChEBI" id="CHEBI:15377"/>
        <dbReference type="ChEBI" id="CHEBI:15378"/>
        <dbReference type="ChEBI" id="CHEBI:28868"/>
        <dbReference type="ChEBI" id="CHEBI:57643"/>
        <dbReference type="ChEBI" id="CHEBI:58168"/>
        <dbReference type="EC" id="3.1.1.4"/>
    </reaction>
</comment>
<comment type="cofactor">
    <cofactor evidence="1">
        <name>Ca(2+)</name>
        <dbReference type="ChEBI" id="CHEBI:29108"/>
    </cofactor>
    <text evidence="1">Binds 1 Ca(2+) ion.</text>
</comment>
<comment type="subcellular location">
    <subcellularLocation>
        <location evidence="1">Secreted</location>
    </subcellularLocation>
</comment>
<comment type="tissue specificity">
    <text>Expressed by the venom gland.</text>
</comment>
<comment type="similarity">
    <text evidence="5">Belongs to the phospholipase A2 family. Group I subfamily. D49 sub-subfamily.</text>
</comment>
<protein>
    <recommendedName>
        <fullName>Acidic phospholipase A2 C</fullName>
        <shortName>svPLA2</shortName>
        <ecNumber>3.1.1.4</ecNumber>
    </recommendedName>
    <alternativeName>
        <fullName>NAJPLA-2C</fullName>
        <shortName>APLA</shortName>
    </alternativeName>
    <alternativeName>
        <fullName>Phosphatidylcholine 2-acylhydrolase</fullName>
    </alternativeName>
</protein>
<proteinExistence type="evidence at transcript level"/>
<accession>Q92086</accession>
<evidence type="ECO:0000250" key="1"/>
<evidence type="ECO:0000255" key="2"/>
<evidence type="ECO:0000255" key="3">
    <source>
        <dbReference type="PROSITE-ProRule" id="PRU10035"/>
    </source>
</evidence>
<evidence type="ECO:0000255" key="4">
    <source>
        <dbReference type="PROSITE-ProRule" id="PRU10036"/>
    </source>
</evidence>
<evidence type="ECO:0000305" key="5"/>
<keyword id="KW-0106">Calcium</keyword>
<keyword id="KW-1015">Disulfide bond</keyword>
<keyword id="KW-0378">Hydrolase</keyword>
<keyword id="KW-0442">Lipid degradation</keyword>
<keyword id="KW-0443">Lipid metabolism</keyword>
<keyword id="KW-0479">Metal-binding</keyword>
<keyword id="KW-0964">Secreted</keyword>
<keyword id="KW-0732">Signal</keyword>
<keyword id="KW-0800">Toxin</keyword>